<protein>
    <recommendedName>
        <fullName evidence="1">2-(5''-triphosphoribosyl)-3'-dephosphocoenzyme-A synthase</fullName>
        <shortName evidence="1">2-(5''-triphosphoribosyl)-3'-dephospho-CoA synthase</shortName>
        <ecNumber evidence="1">2.4.2.52</ecNumber>
    </recommendedName>
</protein>
<evidence type="ECO:0000255" key="1">
    <source>
        <dbReference type="HAMAP-Rule" id="MF_00397"/>
    </source>
</evidence>
<dbReference type="EC" id="2.4.2.52" evidence="1"/>
<dbReference type="EMBL" id="CP000946">
    <property type="protein sequence ID" value="ACA78655.1"/>
    <property type="molecule type" value="Genomic_DNA"/>
</dbReference>
<dbReference type="RefSeq" id="WP_000062457.1">
    <property type="nucleotide sequence ID" value="NZ_MTFT01000005.1"/>
</dbReference>
<dbReference type="KEGG" id="ecl:EcolC_3031"/>
<dbReference type="HOGENOM" id="CLU_056179_1_0_6"/>
<dbReference type="GO" id="GO:0005524">
    <property type="term" value="F:ATP binding"/>
    <property type="evidence" value="ECO:0007669"/>
    <property type="project" value="UniProtKB-KW"/>
</dbReference>
<dbReference type="GO" id="GO:0046917">
    <property type="term" value="F:triphosphoribosyl-dephospho-CoA synthase activity"/>
    <property type="evidence" value="ECO:0007669"/>
    <property type="project" value="UniProtKB-UniRule"/>
</dbReference>
<dbReference type="GO" id="GO:0051191">
    <property type="term" value="P:prosthetic group biosynthetic process"/>
    <property type="evidence" value="ECO:0007669"/>
    <property type="project" value="TreeGrafter"/>
</dbReference>
<dbReference type="FunFam" id="1.10.4200.10:FF:000001">
    <property type="entry name" value="Triphosphoribosyl-dephospho-CoA synthase CitG"/>
    <property type="match status" value="1"/>
</dbReference>
<dbReference type="Gene3D" id="1.10.4200.10">
    <property type="entry name" value="Triphosphoribosyl-dephospho-CoA protein"/>
    <property type="match status" value="1"/>
</dbReference>
<dbReference type="HAMAP" id="MF_00397">
    <property type="entry name" value="CitG"/>
    <property type="match status" value="1"/>
</dbReference>
<dbReference type="InterPro" id="IPR002736">
    <property type="entry name" value="CitG"/>
</dbReference>
<dbReference type="InterPro" id="IPR017551">
    <property type="entry name" value="TriPribosyl-deP-CoA_syn_CitG"/>
</dbReference>
<dbReference type="NCBIfam" id="TIGR03125">
    <property type="entry name" value="citrate_citG"/>
    <property type="match status" value="1"/>
</dbReference>
<dbReference type="NCBIfam" id="NF007503">
    <property type="entry name" value="PRK10096.1"/>
    <property type="match status" value="1"/>
</dbReference>
<dbReference type="PANTHER" id="PTHR30201:SF2">
    <property type="entry name" value="2-(5''-TRIPHOSPHORIBOSYL)-3'-DEPHOSPHOCOENZYME-A SYNTHASE"/>
    <property type="match status" value="1"/>
</dbReference>
<dbReference type="PANTHER" id="PTHR30201">
    <property type="entry name" value="TRIPHOSPHORIBOSYL-DEPHOSPHO-COA SYNTHASE"/>
    <property type="match status" value="1"/>
</dbReference>
<dbReference type="Pfam" id="PF01874">
    <property type="entry name" value="CitG"/>
    <property type="match status" value="1"/>
</dbReference>
<comment type="function">
    <text evidence="1">Catalyzes the formation of 2-(5''-triphosphoribosyl)-3'-dephosphocoenzyme-A, the precursor of the prosthetic group of the holo-acyl carrier protein (gamma chain) of citrate lyase, from ATP and dephospho-CoA.</text>
</comment>
<comment type="catalytic activity">
    <reaction evidence="1">
        <text>3'-dephospho-CoA + ATP = 2'-(5''-triphospho-alpha-D-ribosyl)-3'-dephospho-CoA + adenine</text>
        <dbReference type="Rhea" id="RHEA:15117"/>
        <dbReference type="ChEBI" id="CHEBI:16708"/>
        <dbReference type="ChEBI" id="CHEBI:30616"/>
        <dbReference type="ChEBI" id="CHEBI:57328"/>
        <dbReference type="ChEBI" id="CHEBI:61378"/>
        <dbReference type="EC" id="2.4.2.52"/>
    </reaction>
</comment>
<comment type="similarity">
    <text evidence="1">Belongs to the CitG/MdcB family.</text>
</comment>
<name>CITG_ECOLC</name>
<sequence length="292" mass="31644">MSMPATSTKTTKLATSLIDEYALLGWRAMLTEVNLSPKPGLVDRINCGAHKDMALEDFHRSALAIQGWLPRFIEFGACSAEMAPEAVLHGLRPIGMACEGDMFRATAGVNTHKGSIFSLGLLCAAIGRLLQLNQPVTPTTVCSTAASFCRGLTDRELRTNNSQLTAGQRLYQQLGLTGARGEAEAGYPLVINHALPHYLTLLDQGLDPELALLDTLLLLMAINGDTNVASRGGEGGLRWLQREAQTLLQKGGIRTPADLDYLRQFDRECIERNLSPGGSADLLILTWFLAQI</sequence>
<gene>
    <name evidence="1" type="primary">citG</name>
    <name type="ordered locus">EcolC_3031</name>
</gene>
<keyword id="KW-0067">ATP-binding</keyword>
<keyword id="KW-0547">Nucleotide-binding</keyword>
<keyword id="KW-0808">Transferase</keyword>
<feature type="chain" id="PRO_1000080327" description="2-(5''-triphosphoribosyl)-3'-dephosphocoenzyme-A synthase">
    <location>
        <begin position="1"/>
        <end position="292"/>
    </location>
</feature>
<organism>
    <name type="scientific">Escherichia coli (strain ATCC 8739 / DSM 1576 / NBRC 3972 / NCIMB 8545 / WDCM 00012 / Crooks)</name>
    <dbReference type="NCBI Taxonomy" id="481805"/>
    <lineage>
        <taxon>Bacteria</taxon>
        <taxon>Pseudomonadati</taxon>
        <taxon>Pseudomonadota</taxon>
        <taxon>Gammaproteobacteria</taxon>
        <taxon>Enterobacterales</taxon>
        <taxon>Enterobacteriaceae</taxon>
        <taxon>Escherichia</taxon>
    </lineage>
</organism>
<proteinExistence type="inferred from homology"/>
<reference key="1">
    <citation type="submission" date="2008-02" db="EMBL/GenBank/DDBJ databases">
        <title>Complete sequence of Escherichia coli C str. ATCC 8739.</title>
        <authorList>
            <person name="Copeland A."/>
            <person name="Lucas S."/>
            <person name="Lapidus A."/>
            <person name="Glavina del Rio T."/>
            <person name="Dalin E."/>
            <person name="Tice H."/>
            <person name="Bruce D."/>
            <person name="Goodwin L."/>
            <person name="Pitluck S."/>
            <person name="Kiss H."/>
            <person name="Brettin T."/>
            <person name="Detter J.C."/>
            <person name="Han C."/>
            <person name="Kuske C.R."/>
            <person name="Schmutz J."/>
            <person name="Larimer F."/>
            <person name="Land M."/>
            <person name="Hauser L."/>
            <person name="Kyrpides N."/>
            <person name="Mikhailova N."/>
            <person name="Ingram L."/>
            <person name="Richardson P."/>
        </authorList>
    </citation>
    <scope>NUCLEOTIDE SEQUENCE [LARGE SCALE GENOMIC DNA]</scope>
    <source>
        <strain>ATCC 8739 / DSM 1576 / NBRC 3972 / NCIMB 8545 / WDCM 00012 / Crooks</strain>
    </source>
</reference>
<accession>B1IYJ3</accession>